<reference key="1">
    <citation type="journal article" date="2009" name="J. Bacteriol.">
        <title>The genome of Burkholderia cenocepacia J2315, an epidemic pathogen of cystic fibrosis patients.</title>
        <authorList>
            <person name="Holden M.T."/>
            <person name="Seth-Smith H.M."/>
            <person name="Crossman L.C."/>
            <person name="Sebaihia M."/>
            <person name="Bentley S.D."/>
            <person name="Cerdeno-Tarraga A.M."/>
            <person name="Thomson N.R."/>
            <person name="Bason N."/>
            <person name="Quail M.A."/>
            <person name="Sharp S."/>
            <person name="Cherevach I."/>
            <person name="Churcher C."/>
            <person name="Goodhead I."/>
            <person name="Hauser H."/>
            <person name="Holroyd N."/>
            <person name="Mungall K."/>
            <person name="Scott P."/>
            <person name="Walker D."/>
            <person name="White B."/>
            <person name="Rose H."/>
            <person name="Iversen P."/>
            <person name="Mil-Homens D."/>
            <person name="Rocha E.P."/>
            <person name="Fialho A.M."/>
            <person name="Baldwin A."/>
            <person name="Dowson C."/>
            <person name="Barrell B.G."/>
            <person name="Govan J.R."/>
            <person name="Vandamme P."/>
            <person name="Hart C.A."/>
            <person name="Mahenthiralingam E."/>
            <person name="Parkhill J."/>
        </authorList>
    </citation>
    <scope>NUCLEOTIDE SEQUENCE [LARGE SCALE GENOMIC DNA]</scope>
    <source>
        <strain>ATCC BAA-245 / DSM 16553 / LMG 16656 / NCTC 13227 / J2315 / CF5610</strain>
    </source>
</reference>
<sequence length="307" mass="34626">MTDSTYDVARVRTYLQGLQTRIADALGALDGTPLATDTWQRGPAERLRGGGCTRILEGGRVFERAGIGFSDVAGDALPPSASAARPQLAGRGFEALGVSLVLHPRNPYCPTVHMNVRMLIATKPGEAPVFWFGGGMDLTPVYGFEDDARHFHQTCKDALDPFGIELYPRFKQWCDEYFFLKHRNETRGIGGIFFDDFSEPGFERSFDLMQSVGDAFLHAYLPIVERRAELPYGERERDFQAYRRGRYVEFNLVFDRGTLFGLQSGGRTESILMSMPPVANWRYNWQPEPGSAEARLYSDFLVPRDWV</sequence>
<gene>
    <name evidence="1" type="primary">hemF</name>
    <name type="ordered locus">BceJ2315_23500</name>
    <name type="ORF">BCAL2390</name>
</gene>
<proteinExistence type="inferred from homology"/>
<organism>
    <name type="scientific">Burkholderia cenocepacia (strain ATCC BAA-245 / DSM 16553 / LMG 16656 / NCTC 13227 / J2315 / CF5610)</name>
    <name type="common">Burkholderia cepacia (strain J2315)</name>
    <dbReference type="NCBI Taxonomy" id="216591"/>
    <lineage>
        <taxon>Bacteria</taxon>
        <taxon>Pseudomonadati</taxon>
        <taxon>Pseudomonadota</taxon>
        <taxon>Betaproteobacteria</taxon>
        <taxon>Burkholderiales</taxon>
        <taxon>Burkholderiaceae</taxon>
        <taxon>Burkholderia</taxon>
        <taxon>Burkholderia cepacia complex</taxon>
    </lineage>
</organism>
<name>HEM6_BURCJ</name>
<protein>
    <recommendedName>
        <fullName evidence="1">Oxygen-dependent coproporphyrinogen-III oxidase</fullName>
        <shortName evidence="1">CPO</shortName>
        <shortName evidence="1">Coprogen oxidase</shortName>
        <shortName evidence="1">Coproporphyrinogenase</shortName>
        <ecNumber evidence="1">1.3.3.3</ecNumber>
    </recommendedName>
</protein>
<keyword id="KW-0963">Cytoplasm</keyword>
<keyword id="KW-0350">Heme biosynthesis</keyword>
<keyword id="KW-0479">Metal-binding</keyword>
<keyword id="KW-0560">Oxidoreductase</keyword>
<keyword id="KW-0627">Porphyrin biosynthesis</keyword>
<evidence type="ECO:0000255" key="1">
    <source>
        <dbReference type="HAMAP-Rule" id="MF_00333"/>
    </source>
</evidence>
<feature type="chain" id="PRO_1000119792" description="Oxygen-dependent coproporphyrinogen-III oxidase">
    <location>
        <begin position="1"/>
        <end position="307"/>
    </location>
</feature>
<feature type="region of interest" description="Important for dimerization" evidence="1">
    <location>
        <begin position="247"/>
        <end position="282"/>
    </location>
</feature>
<feature type="active site" description="Proton donor" evidence="1">
    <location>
        <position position="113"/>
    </location>
</feature>
<feature type="binding site" evidence="1">
    <location>
        <position position="99"/>
    </location>
    <ligand>
        <name>substrate</name>
    </ligand>
</feature>
<feature type="binding site" evidence="1">
    <location>
        <position position="103"/>
    </location>
    <ligand>
        <name>a divalent metal cation</name>
        <dbReference type="ChEBI" id="CHEBI:60240"/>
    </ligand>
</feature>
<feature type="binding site" evidence="1">
    <location>
        <position position="113"/>
    </location>
    <ligand>
        <name>a divalent metal cation</name>
        <dbReference type="ChEBI" id="CHEBI:60240"/>
    </ligand>
</feature>
<feature type="binding site" evidence="1">
    <location>
        <begin position="115"/>
        <end position="117"/>
    </location>
    <ligand>
        <name>substrate</name>
    </ligand>
</feature>
<feature type="binding site" evidence="1">
    <location>
        <position position="152"/>
    </location>
    <ligand>
        <name>a divalent metal cation</name>
        <dbReference type="ChEBI" id="CHEBI:60240"/>
    </ligand>
</feature>
<feature type="binding site" evidence="1">
    <location>
        <position position="182"/>
    </location>
    <ligand>
        <name>a divalent metal cation</name>
        <dbReference type="ChEBI" id="CHEBI:60240"/>
    </ligand>
</feature>
<feature type="binding site" evidence="1">
    <location>
        <begin position="265"/>
        <end position="267"/>
    </location>
    <ligand>
        <name>substrate</name>
    </ligand>
</feature>
<feature type="site" description="Important for dimerization" evidence="1">
    <location>
        <position position="182"/>
    </location>
</feature>
<accession>B4E5R8</accession>
<comment type="function">
    <text evidence="1">Involved in the heme biosynthesis. Catalyzes the aerobic oxidative decarboxylation of propionate groups of rings A and B of coproporphyrinogen-III to yield the vinyl groups in protoporphyrinogen-IX.</text>
</comment>
<comment type="catalytic activity">
    <reaction evidence="1">
        <text>coproporphyrinogen III + O2 + 2 H(+) = protoporphyrinogen IX + 2 CO2 + 2 H2O</text>
        <dbReference type="Rhea" id="RHEA:18257"/>
        <dbReference type="ChEBI" id="CHEBI:15377"/>
        <dbReference type="ChEBI" id="CHEBI:15378"/>
        <dbReference type="ChEBI" id="CHEBI:15379"/>
        <dbReference type="ChEBI" id="CHEBI:16526"/>
        <dbReference type="ChEBI" id="CHEBI:57307"/>
        <dbReference type="ChEBI" id="CHEBI:57309"/>
        <dbReference type="EC" id="1.3.3.3"/>
    </reaction>
</comment>
<comment type="cofactor">
    <cofactor evidence="1">
        <name>a divalent metal cation</name>
        <dbReference type="ChEBI" id="CHEBI:60240"/>
    </cofactor>
</comment>
<comment type="pathway">
    <text evidence="1">Porphyrin-containing compound metabolism; protoporphyrin-IX biosynthesis; protoporphyrinogen-IX from coproporphyrinogen-III (O2 route): step 1/1.</text>
</comment>
<comment type="subunit">
    <text evidence="1">Homodimer.</text>
</comment>
<comment type="subcellular location">
    <subcellularLocation>
        <location evidence="1">Cytoplasm</location>
    </subcellularLocation>
</comment>
<comment type="similarity">
    <text evidence="1">Belongs to the aerobic coproporphyrinogen-III oxidase family.</text>
</comment>
<dbReference type="EC" id="1.3.3.3" evidence="1"/>
<dbReference type="EMBL" id="AM747720">
    <property type="protein sequence ID" value="CAR52691.1"/>
    <property type="molecule type" value="Genomic_DNA"/>
</dbReference>
<dbReference type="RefSeq" id="WP_006484264.1">
    <property type="nucleotide sequence ID" value="NC_011000.1"/>
</dbReference>
<dbReference type="SMR" id="B4E5R8"/>
<dbReference type="KEGG" id="bcj:BCAL2390"/>
<dbReference type="eggNOG" id="COG0408">
    <property type="taxonomic scope" value="Bacteria"/>
</dbReference>
<dbReference type="HOGENOM" id="CLU_026169_0_1_4"/>
<dbReference type="BioCyc" id="BCEN216591:G1G1V-2637-MONOMER"/>
<dbReference type="UniPathway" id="UPA00251">
    <property type="reaction ID" value="UER00322"/>
</dbReference>
<dbReference type="Proteomes" id="UP000001035">
    <property type="component" value="Chromosome 1"/>
</dbReference>
<dbReference type="GO" id="GO:0005737">
    <property type="term" value="C:cytoplasm"/>
    <property type="evidence" value="ECO:0007669"/>
    <property type="project" value="UniProtKB-SubCell"/>
</dbReference>
<dbReference type="GO" id="GO:0004109">
    <property type="term" value="F:coproporphyrinogen oxidase activity"/>
    <property type="evidence" value="ECO:0007669"/>
    <property type="project" value="UniProtKB-UniRule"/>
</dbReference>
<dbReference type="GO" id="GO:0046872">
    <property type="term" value="F:metal ion binding"/>
    <property type="evidence" value="ECO:0007669"/>
    <property type="project" value="UniProtKB-KW"/>
</dbReference>
<dbReference type="GO" id="GO:0042803">
    <property type="term" value="F:protein homodimerization activity"/>
    <property type="evidence" value="ECO:0000250"/>
    <property type="project" value="UniProtKB"/>
</dbReference>
<dbReference type="GO" id="GO:0006782">
    <property type="term" value="P:protoporphyrinogen IX biosynthetic process"/>
    <property type="evidence" value="ECO:0007669"/>
    <property type="project" value="UniProtKB-UniRule"/>
</dbReference>
<dbReference type="FunFam" id="3.40.1500.10:FF:000001">
    <property type="entry name" value="Oxygen-dependent coproporphyrinogen-III oxidase"/>
    <property type="match status" value="1"/>
</dbReference>
<dbReference type="Gene3D" id="3.40.1500.10">
    <property type="entry name" value="Coproporphyrinogen III oxidase, aerobic"/>
    <property type="match status" value="1"/>
</dbReference>
<dbReference type="HAMAP" id="MF_00333">
    <property type="entry name" value="Coprogen_oxidas"/>
    <property type="match status" value="1"/>
</dbReference>
<dbReference type="InterPro" id="IPR001260">
    <property type="entry name" value="Coprogen_oxidase_aer"/>
</dbReference>
<dbReference type="InterPro" id="IPR036406">
    <property type="entry name" value="Coprogen_oxidase_aer_sf"/>
</dbReference>
<dbReference type="InterPro" id="IPR018375">
    <property type="entry name" value="Coprogen_oxidase_CS"/>
</dbReference>
<dbReference type="NCBIfam" id="NF003727">
    <property type="entry name" value="PRK05330.1"/>
    <property type="match status" value="1"/>
</dbReference>
<dbReference type="PANTHER" id="PTHR10755">
    <property type="entry name" value="COPROPORPHYRINOGEN III OXIDASE, MITOCHONDRIAL"/>
    <property type="match status" value="1"/>
</dbReference>
<dbReference type="PANTHER" id="PTHR10755:SF0">
    <property type="entry name" value="OXYGEN-DEPENDENT COPROPORPHYRINOGEN-III OXIDASE, MITOCHONDRIAL"/>
    <property type="match status" value="1"/>
</dbReference>
<dbReference type="Pfam" id="PF01218">
    <property type="entry name" value="Coprogen_oxidas"/>
    <property type="match status" value="1"/>
</dbReference>
<dbReference type="PIRSF" id="PIRSF000166">
    <property type="entry name" value="Coproporphyri_ox"/>
    <property type="match status" value="1"/>
</dbReference>
<dbReference type="PRINTS" id="PR00073">
    <property type="entry name" value="COPRGNOXDASE"/>
</dbReference>
<dbReference type="SUPFAM" id="SSF102886">
    <property type="entry name" value="Coproporphyrinogen III oxidase"/>
    <property type="match status" value="1"/>
</dbReference>
<dbReference type="PROSITE" id="PS01021">
    <property type="entry name" value="COPROGEN_OXIDASE"/>
    <property type="match status" value="1"/>
</dbReference>